<gene>
    <name type="primary">FGA</name>
</gene>
<reference key="1">
    <citation type="journal article" date="1985" name="Sci. Sin., Ser. B Chem. Biol. Agric. Med. Earth Sci.">
        <title>Purification and primary structures of duck fibrinopeptides A and B.</title>
        <authorList>
            <person name="Min Y."/>
            <person name="Ping Z."/>
            <person name="Yaoshi Z."/>
        </authorList>
    </citation>
    <scope>PROTEIN SEQUENCE</scope>
    <scope>PYROGLUTAMATE FORMATION AT GLN-1</scope>
</reference>
<accession>P12801</accession>
<organism>
    <name type="scientific">Anas platyrhynchos</name>
    <name type="common">Mallard</name>
    <name type="synonym">Anas boschas</name>
    <dbReference type="NCBI Taxonomy" id="8839"/>
    <lineage>
        <taxon>Eukaryota</taxon>
        <taxon>Metazoa</taxon>
        <taxon>Chordata</taxon>
        <taxon>Craniata</taxon>
        <taxon>Vertebrata</taxon>
        <taxon>Euteleostomi</taxon>
        <taxon>Archelosauria</taxon>
        <taxon>Archosauria</taxon>
        <taxon>Dinosauria</taxon>
        <taxon>Saurischia</taxon>
        <taxon>Theropoda</taxon>
        <taxon>Coelurosauria</taxon>
        <taxon>Aves</taxon>
        <taxon>Neognathae</taxon>
        <taxon>Galloanserae</taxon>
        <taxon>Anseriformes</taxon>
        <taxon>Anatidae</taxon>
        <taxon>Anatinae</taxon>
        <taxon>Anas</taxon>
    </lineage>
</organism>
<comment type="function">
    <text evidence="1">Cleaved by the protease thrombin to yield monomers which, together with fibrinogen beta (FGB) and fibrinogen gamma (FGG), polymerize to form an insoluble fibrin matrix. Fibrin has a major function in hemostasis as one of the primary components of blood clots.</text>
</comment>
<comment type="subunit">
    <text evidence="2">Heterohexamer; disulfide linked. Contains 2 sets of 3 non-identical chains (alpha, beta and gamma). The 2 heterotrimers are in head to head conformation with the N-termini in a small central domain (By similarity).</text>
</comment>
<comment type="subcellular location">
    <subcellularLocation>
        <location>Secreted</location>
    </subcellularLocation>
</comment>
<comment type="domain">
    <text evidence="2">A long coiled coil structure formed by 3 polypeptide chains connects the central nodule to the C-terminal domains (distal nodules). The long C-terminal ends of the alpha chains fold back, contributing a fourth strand to the coiled coil structure.</text>
</comment>
<comment type="PTM">
    <text>Conversion of fibrinogen to fibrin is triggered by thrombin, which cleaves fibrinopeptides A and B from alpha and beta chains, and thus exposes the N-terminal polymerization sites responsible for the formation of the soft clot. The soft clot is converted into the hard clot by factor XIIIA which catalyzes the epsilon-(gamma-glutamyl)lysine cross-linking between gamma chains (stronger) and between alpha chains (weaker) of different monomers.</text>
</comment>
<comment type="PTM">
    <text>Forms F13A-mediated cross-links between a glutamine and the epsilon-amino group of a lysine residue, forming fibronectin-fibrinogen heteropolymers.</text>
</comment>
<dbReference type="PIR" id="JP0101">
    <property type="entry name" value="JP0101"/>
</dbReference>
<dbReference type="Proteomes" id="UP000694400">
    <property type="component" value="Unplaced"/>
</dbReference>
<dbReference type="GO" id="GO:0005576">
    <property type="term" value="C:extracellular region"/>
    <property type="evidence" value="ECO:0007669"/>
    <property type="project" value="UniProtKB-SubCell"/>
</dbReference>
<dbReference type="GO" id="GO:0007596">
    <property type="term" value="P:blood coagulation"/>
    <property type="evidence" value="ECO:0007669"/>
    <property type="project" value="UniProtKB-KW"/>
</dbReference>
<protein>
    <recommendedName>
        <fullName>Fibrinogen alpha chain</fullName>
    </recommendedName>
    <component>
        <recommendedName>
            <fullName>Fibrinopeptide A</fullName>
        </recommendedName>
    </component>
</protein>
<sequence length="15" mass="1580">QDGKSSFQKEGGGVR</sequence>
<name>FIBA_ANAPL</name>
<proteinExistence type="evidence at protein level"/>
<feature type="peptide" id="PRO_0000009045" description="Fibrinopeptide A">
    <location>
        <begin position="1"/>
        <end position="15"/>
    </location>
</feature>
<feature type="modified residue" description="Pyrrolidone carboxylic acid" evidence="3">
    <location>
        <position position="1"/>
    </location>
</feature>
<feature type="non-terminal residue">
    <location>
        <position position="15"/>
    </location>
</feature>
<evidence type="ECO:0000250" key="1">
    <source>
        <dbReference type="UniProtKB" id="E9PV24"/>
    </source>
</evidence>
<evidence type="ECO:0000250" key="2">
    <source>
        <dbReference type="UniProtKB" id="P02671"/>
    </source>
</evidence>
<evidence type="ECO:0000269" key="3">
    <source>
    </source>
</evidence>
<keyword id="KW-0094">Blood coagulation</keyword>
<keyword id="KW-0175">Coiled coil</keyword>
<keyword id="KW-0903">Direct protein sequencing</keyword>
<keyword id="KW-1015">Disulfide bond</keyword>
<keyword id="KW-0356">Hemostasis</keyword>
<keyword id="KW-0873">Pyrrolidone carboxylic acid</keyword>
<keyword id="KW-0964">Secreted</keyword>